<sequence length="343" mass="37268">MAALYGGVEGGGTRSKVLLLSEDGQILAEADGLSTNHWLIGTDQCVERINEMVDRAKQKAGVDPLVPLRSLGLSLSGGEQEDAVRLLIEELRHRFPNLSENYLITTDAAGSIATATPDGGIVLISGTGSNCRLINPDGSESGCGGWGHMMGDEGSAYWIAHQAVKIVFDSIDNLEAAPHDIGHVKQAMFDYFQVPDRLGILTHLYRDFDKCKFAGFCQKIAEGAHQGDPLSRYIFRKAGEMLGRHVVAVLPEIDPVLFQGELGLPILCVGSVWKSWELLKEGFLLALTLGREQQAQNSFSSFTLMKLRHSSALGGASLGARHIGYHLPMDYSINAIAFYSYTF</sequence>
<keyword id="KW-0007">Acetylation</keyword>
<keyword id="KW-0067">ATP-binding</keyword>
<keyword id="KW-0391">Immunity</keyword>
<keyword id="KW-0399">Innate immunity</keyword>
<keyword id="KW-0418">Kinase</keyword>
<keyword id="KW-0547">Nucleotide-binding</keyword>
<keyword id="KW-0597">Phosphoprotein</keyword>
<keyword id="KW-1185">Reference proteome</keyword>
<keyword id="KW-0808">Transferase</keyword>
<comment type="function">
    <text evidence="2 3 4">Converts endogenous N-acetylglucosamine (GlcNAc), a major component of complex carbohydrates, from lysosomal degradation or nutritional sources into GlcNAc 6-phosphate (PubMed:10824116). Also has N-acetylmannosamine (ManNAc) kinase activity (PubMed:10824116). Involved in the N-glycolylneuraminic acid (Neu5Gc) degradation pathway (PubMed:22692205). Also involved in innate immunity by promoting detection of bacterial peptidoglycan by NOD2: acts by catalyzing phosphorylation of muramyl dipeptide (MDP), a fragment of bacterial peptidoglycan, to generate 6-O-phospho-muramyl dipeptide, which acts as a direct ligand for NOD2 (PubMed:36002575).</text>
</comment>
<comment type="catalytic activity">
    <reaction evidence="2">
        <text>N-acetyl-D-glucosamine + ATP = N-acetyl-D-glucosamine 6-phosphate + ADP + H(+)</text>
        <dbReference type="Rhea" id="RHEA:17417"/>
        <dbReference type="ChEBI" id="CHEBI:15378"/>
        <dbReference type="ChEBI" id="CHEBI:30616"/>
        <dbReference type="ChEBI" id="CHEBI:57513"/>
        <dbReference type="ChEBI" id="CHEBI:456216"/>
        <dbReference type="ChEBI" id="CHEBI:506227"/>
        <dbReference type="EC" id="2.7.1.59"/>
    </reaction>
    <physiologicalReaction direction="left-to-right" evidence="7">
        <dbReference type="Rhea" id="RHEA:17418"/>
    </physiologicalReaction>
</comment>
<comment type="catalytic activity">
    <reaction evidence="2">
        <text>aldehydo-N-acetyl-D-mannosamine + ATP = aldehydo-N-acetyl-D-mannosamine 6-phosphate + ADP + H(+)</text>
        <dbReference type="Rhea" id="RHEA:25253"/>
        <dbReference type="ChEBI" id="CHEBI:15378"/>
        <dbReference type="ChEBI" id="CHEBI:17122"/>
        <dbReference type="ChEBI" id="CHEBI:30616"/>
        <dbReference type="ChEBI" id="CHEBI:58557"/>
        <dbReference type="ChEBI" id="CHEBI:456216"/>
        <dbReference type="EC" id="2.7.1.60"/>
    </reaction>
    <physiologicalReaction direction="left-to-right" evidence="2">
        <dbReference type="Rhea" id="RHEA:25254"/>
    </physiologicalReaction>
</comment>
<comment type="catalytic activity">
    <reaction evidence="1">
        <text>N-acetyl-D-muramoyl-L-alanyl-D-isoglutamine + ATP = 6-O-phospho-N-acetyl-D-muramoyl-L-alanyl-D-isoglutamine + ADP + H(+)</text>
        <dbReference type="Rhea" id="RHEA:75935"/>
        <dbReference type="ChEBI" id="CHEBI:15378"/>
        <dbReference type="ChEBI" id="CHEBI:30616"/>
        <dbReference type="ChEBI" id="CHEBI:155830"/>
        <dbReference type="ChEBI" id="CHEBI:194492"/>
        <dbReference type="ChEBI" id="CHEBI:456216"/>
    </reaction>
    <physiologicalReaction direction="left-to-right" evidence="1">
        <dbReference type="Rhea" id="RHEA:75936"/>
    </physiologicalReaction>
</comment>
<comment type="pathway">
    <text evidence="2 3">Amino-sugar metabolism; N-acetylneuraminate degradation.</text>
</comment>
<comment type="subunit">
    <text evidence="2">Homodimer.</text>
</comment>
<comment type="tissue specificity">
    <text evidence="2">Ubiquitous.</text>
</comment>
<comment type="disruption phenotype">
    <text evidence="4">No visible phenotype in absence of infection (PubMed:36002575). Macrophages are completely deficient in muramyl dipeptide (MDP) sensing (PubMed:36002575).</text>
</comment>
<comment type="similarity">
    <text evidence="6">Belongs to the eukaryotic-type N-acetylglucosamine kinase family.</text>
</comment>
<accession>Q9QZ08</accession>
<organism>
    <name type="scientific">Mus musculus</name>
    <name type="common">Mouse</name>
    <dbReference type="NCBI Taxonomy" id="10090"/>
    <lineage>
        <taxon>Eukaryota</taxon>
        <taxon>Metazoa</taxon>
        <taxon>Chordata</taxon>
        <taxon>Craniata</taxon>
        <taxon>Vertebrata</taxon>
        <taxon>Euteleostomi</taxon>
        <taxon>Mammalia</taxon>
        <taxon>Eutheria</taxon>
        <taxon>Euarchontoglires</taxon>
        <taxon>Glires</taxon>
        <taxon>Rodentia</taxon>
        <taxon>Myomorpha</taxon>
        <taxon>Muroidea</taxon>
        <taxon>Muridae</taxon>
        <taxon>Murinae</taxon>
        <taxon>Mus</taxon>
        <taxon>Mus</taxon>
    </lineage>
</organism>
<evidence type="ECO:0000250" key="1">
    <source>
        <dbReference type="UniProtKB" id="Q9UJ70"/>
    </source>
</evidence>
<evidence type="ECO:0000269" key="2">
    <source>
    </source>
</evidence>
<evidence type="ECO:0000269" key="3">
    <source>
    </source>
</evidence>
<evidence type="ECO:0000269" key="4">
    <source>
    </source>
</evidence>
<evidence type="ECO:0000303" key="5">
    <source>
    </source>
</evidence>
<evidence type="ECO:0000305" key="6"/>
<evidence type="ECO:0000305" key="7">
    <source>
    </source>
</evidence>
<evidence type="ECO:0007744" key="8">
    <source>
    </source>
</evidence>
<name>NAGK_MOUSE</name>
<gene>
    <name type="primary">Nagk</name>
    <name type="synonym">Gnk</name>
</gene>
<dbReference type="EC" id="2.7.1.59" evidence="2"/>
<dbReference type="EC" id="2.7.1.-" evidence="1"/>
<dbReference type="EC" id="2.7.1.60" evidence="2"/>
<dbReference type="EMBL" id="AJ242909">
    <property type="protein sequence ID" value="CAB61849.1"/>
    <property type="molecule type" value="mRNA"/>
</dbReference>
<dbReference type="EMBL" id="BC004689">
    <property type="protein sequence ID" value="AAH04689.1"/>
    <property type="molecule type" value="mRNA"/>
</dbReference>
<dbReference type="CCDS" id="CCDS20286.1"/>
<dbReference type="RefSeq" id="NP_062415.1">
    <property type="nucleotide sequence ID" value="NM_019542.3"/>
</dbReference>
<dbReference type="SMR" id="Q9QZ08"/>
<dbReference type="BioGRID" id="207820">
    <property type="interactions" value="9"/>
</dbReference>
<dbReference type="FunCoup" id="Q9QZ08">
    <property type="interactions" value="1607"/>
</dbReference>
<dbReference type="IntAct" id="Q9QZ08">
    <property type="interactions" value="3"/>
</dbReference>
<dbReference type="MINT" id="Q9QZ08"/>
<dbReference type="STRING" id="10090.ENSMUSP00000109482"/>
<dbReference type="iPTMnet" id="Q9QZ08"/>
<dbReference type="PhosphoSitePlus" id="Q9QZ08"/>
<dbReference type="REPRODUCTION-2DPAGE" id="Q9QZ08"/>
<dbReference type="jPOST" id="Q9QZ08"/>
<dbReference type="PaxDb" id="10090-ENSMUSP00000042026"/>
<dbReference type="ProteomicsDB" id="287431"/>
<dbReference type="Pumba" id="Q9QZ08"/>
<dbReference type="Antibodypedia" id="31185">
    <property type="antibodies" value="297 antibodies from 27 providers"/>
</dbReference>
<dbReference type="DNASU" id="56174"/>
<dbReference type="Ensembl" id="ENSMUST00000037376.14">
    <property type="protein sequence ID" value="ENSMUSP00000042026.8"/>
    <property type="gene ID" value="ENSMUSG00000034744.14"/>
</dbReference>
<dbReference type="GeneID" id="56174"/>
<dbReference type="KEGG" id="mmu:56174"/>
<dbReference type="UCSC" id="uc009coh.2">
    <property type="organism name" value="mouse"/>
</dbReference>
<dbReference type="AGR" id="MGI:1860418"/>
<dbReference type="CTD" id="55577"/>
<dbReference type="MGI" id="MGI:1860418">
    <property type="gene designation" value="Nagk"/>
</dbReference>
<dbReference type="VEuPathDB" id="HostDB:ENSMUSG00000034744"/>
<dbReference type="eggNOG" id="KOG1794">
    <property type="taxonomic scope" value="Eukaryota"/>
</dbReference>
<dbReference type="GeneTree" id="ENSGT00510000047418"/>
<dbReference type="HOGENOM" id="CLU_016274_0_0_1"/>
<dbReference type="InParanoid" id="Q9QZ08"/>
<dbReference type="OMA" id="IETRYDM"/>
<dbReference type="OrthoDB" id="311172at2759"/>
<dbReference type="PhylomeDB" id="Q9QZ08"/>
<dbReference type="TreeFam" id="TF314158"/>
<dbReference type="BRENDA" id="2.7.1.59">
    <property type="organism ID" value="3474"/>
</dbReference>
<dbReference type="Reactome" id="R-MMU-446210">
    <property type="pathway name" value="Synthesis of UDP-N-acetyl-glucosamine"/>
</dbReference>
<dbReference type="SABIO-RK" id="Q9QZ08"/>
<dbReference type="UniPathway" id="UPA00629"/>
<dbReference type="BioGRID-ORCS" id="56174">
    <property type="hits" value="3 hits in 76 CRISPR screens"/>
</dbReference>
<dbReference type="ChiTaRS" id="Nagk">
    <property type="organism name" value="mouse"/>
</dbReference>
<dbReference type="PRO" id="PR:Q9QZ08"/>
<dbReference type="Proteomes" id="UP000000589">
    <property type="component" value="Chromosome 6"/>
</dbReference>
<dbReference type="RNAct" id="Q9QZ08">
    <property type="molecule type" value="protein"/>
</dbReference>
<dbReference type="Bgee" id="ENSMUSG00000034744">
    <property type="expression patterns" value="Expressed in embryonic brain and 266 other cell types or tissues"/>
</dbReference>
<dbReference type="ExpressionAtlas" id="Q9QZ08">
    <property type="expression patterns" value="baseline and differential"/>
</dbReference>
<dbReference type="GO" id="GO:0005524">
    <property type="term" value="F:ATP binding"/>
    <property type="evidence" value="ECO:0007669"/>
    <property type="project" value="UniProtKB-KW"/>
</dbReference>
<dbReference type="GO" id="GO:0160047">
    <property type="term" value="F:muramyl dipeptide kinase activity"/>
    <property type="evidence" value="ECO:0000314"/>
    <property type="project" value="UniProtKB"/>
</dbReference>
<dbReference type="GO" id="GO:0045127">
    <property type="term" value="F:N-acetylglucosamine kinase activity"/>
    <property type="evidence" value="ECO:0000314"/>
    <property type="project" value="MGI"/>
</dbReference>
<dbReference type="GO" id="GO:0009384">
    <property type="term" value="F:N-acylmannosamine kinase activity"/>
    <property type="evidence" value="ECO:0000314"/>
    <property type="project" value="MGI"/>
</dbReference>
<dbReference type="GO" id="GO:0042742">
    <property type="term" value="P:defense response to bacterium"/>
    <property type="evidence" value="ECO:0007669"/>
    <property type="project" value="Ensembl"/>
</dbReference>
<dbReference type="GO" id="GO:0045087">
    <property type="term" value="P:innate immune response"/>
    <property type="evidence" value="ECO:0007669"/>
    <property type="project" value="UniProtKB-KW"/>
</dbReference>
<dbReference type="GO" id="GO:0006046">
    <property type="term" value="P:N-acetylglucosamine catabolic process"/>
    <property type="evidence" value="ECO:0007669"/>
    <property type="project" value="Ensembl"/>
</dbReference>
<dbReference type="GO" id="GO:0006044">
    <property type="term" value="P:N-acetylglucosamine metabolic process"/>
    <property type="evidence" value="ECO:0000314"/>
    <property type="project" value="MGI"/>
</dbReference>
<dbReference type="GO" id="GO:0019262">
    <property type="term" value="P:N-acetylneuraminate catabolic process"/>
    <property type="evidence" value="ECO:0000304"/>
    <property type="project" value="UniProtKB"/>
</dbReference>
<dbReference type="GO" id="GO:0070434">
    <property type="term" value="P:positive regulation of nucleotide-binding oligomerization domain containing 2 signaling pathway"/>
    <property type="evidence" value="ECO:0000314"/>
    <property type="project" value="UniProtKB"/>
</dbReference>
<dbReference type="GO" id="GO:0032495">
    <property type="term" value="P:response to muramyl dipeptide"/>
    <property type="evidence" value="ECO:0007669"/>
    <property type="project" value="Ensembl"/>
</dbReference>
<dbReference type="GO" id="GO:0006048">
    <property type="term" value="P:UDP-N-acetylglucosamine biosynthetic process"/>
    <property type="evidence" value="ECO:0007669"/>
    <property type="project" value="Ensembl"/>
</dbReference>
<dbReference type="CDD" id="cd24078">
    <property type="entry name" value="ASKHA_NBD_NAGK_meta"/>
    <property type="match status" value="1"/>
</dbReference>
<dbReference type="FunFam" id="3.30.420.40:FF:000120">
    <property type="entry name" value="N-acetyl-D-glucosamine kinase isoform X1"/>
    <property type="match status" value="1"/>
</dbReference>
<dbReference type="Gene3D" id="3.30.420.40">
    <property type="match status" value="1"/>
</dbReference>
<dbReference type="InterPro" id="IPR002731">
    <property type="entry name" value="ATPase_BadF"/>
</dbReference>
<dbReference type="InterPro" id="IPR043129">
    <property type="entry name" value="ATPase_NBD"/>
</dbReference>
<dbReference type="InterPro" id="IPR039758">
    <property type="entry name" value="NAGK-like"/>
</dbReference>
<dbReference type="PANTHER" id="PTHR12862">
    <property type="entry name" value="BADF TYPE ATPASE DOMAIN-CONTAINING PROTEIN"/>
    <property type="match status" value="1"/>
</dbReference>
<dbReference type="PANTHER" id="PTHR12862:SF0">
    <property type="entry name" value="N-ACETYL-D-GLUCOSAMINE KINASE"/>
    <property type="match status" value="1"/>
</dbReference>
<dbReference type="Pfam" id="PF01869">
    <property type="entry name" value="BcrAD_BadFG"/>
    <property type="match status" value="1"/>
</dbReference>
<dbReference type="SUPFAM" id="SSF53067">
    <property type="entry name" value="Actin-like ATPase domain"/>
    <property type="match status" value="2"/>
</dbReference>
<protein>
    <recommendedName>
        <fullName>N-acetyl-D-glucosamine kinase</fullName>
        <shortName evidence="5">N-acetylglucosamine kinase</shortName>
        <ecNumber evidence="2">2.7.1.59</ecNumber>
    </recommendedName>
    <alternativeName>
        <fullName>GlcNAc kinase</fullName>
    </alternativeName>
    <alternativeName>
        <fullName evidence="6">Muramyl dipeptide kinase</fullName>
        <ecNumber evidence="1">2.7.1.-</ecNumber>
    </alternativeName>
    <alternativeName>
        <fullName evidence="6">N-acetyl-D-mannosamine kinase</fullName>
        <ecNumber evidence="2">2.7.1.60</ecNumber>
    </alternativeName>
</protein>
<feature type="initiator methionine" description="Removed" evidence="1">
    <location>
        <position position="1"/>
    </location>
</feature>
<feature type="chain" id="PRO_0000096697" description="N-acetyl-D-glucosamine kinase">
    <location>
        <begin position="2"/>
        <end position="343"/>
    </location>
</feature>
<feature type="binding site" evidence="1">
    <location>
        <position position="13"/>
    </location>
    <ligand>
        <name>ATP</name>
        <dbReference type="ChEBI" id="CHEBI:30616"/>
    </ligand>
</feature>
<feature type="binding site" evidence="1">
    <location>
        <position position="36"/>
    </location>
    <ligand>
        <name>N-acetyl-D-glucosamine</name>
        <dbReference type="ChEBI" id="CHEBI:506227"/>
    </ligand>
</feature>
<feature type="binding site" evidence="1">
    <location>
        <position position="107"/>
    </location>
    <ligand>
        <name>N-acetyl-D-glucosamine</name>
        <dbReference type="ChEBI" id="CHEBI:506227"/>
    </ligand>
</feature>
<feature type="binding site" evidence="1">
    <location>
        <position position="127"/>
    </location>
    <ligand>
        <name>ATP</name>
        <dbReference type="ChEBI" id="CHEBI:30616"/>
    </ligand>
</feature>
<feature type="binding site" evidence="1">
    <location>
        <begin position="129"/>
        <end position="130"/>
    </location>
    <ligand>
        <name>N-acetyl-D-glucosamine</name>
        <dbReference type="ChEBI" id="CHEBI:506227"/>
    </ligand>
</feature>
<feature type="binding site" evidence="1">
    <location>
        <begin position="145"/>
        <end position="147"/>
    </location>
    <ligand>
        <name>N-acetyl-D-glucosamine</name>
        <dbReference type="ChEBI" id="CHEBI:506227"/>
    </ligand>
</feature>
<feature type="binding site" evidence="1">
    <location>
        <position position="152"/>
    </location>
    <ligand>
        <name>N-acetyl-D-glucosamine</name>
        <dbReference type="ChEBI" id="CHEBI:506227"/>
    </ligand>
</feature>
<feature type="binding site" evidence="1">
    <location>
        <position position="214"/>
    </location>
    <ligand>
        <name>ATP</name>
        <dbReference type="ChEBI" id="CHEBI:30616"/>
    </ligand>
</feature>
<feature type="binding site" evidence="1">
    <location>
        <position position="271"/>
    </location>
    <ligand>
        <name>ATP</name>
        <dbReference type="ChEBI" id="CHEBI:30616"/>
    </ligand>
</feature>
<feature type="binding site" evidence="1">
    <location>
        <position position="275"/>
    </location>
    <ligand>
        <name>ATP</name>
        <dbReference type="ChEBI" id="CHEBI:30616"/>
    </ligand>
</feature>
<feature type="modified residue" description="N-acetylalanine" evidence="1">
    <location>
        <position position="2"/>
    </location>
</feature>
<feature type="modified residue" description="Phosphoserine" evidence="8">
    <location>
        <position position="76"/>
    </location>
</feature>
<feature type="modified residue" description="Phosphotyrosine" evidence="1">
    <location>
        <position position="205"/>
    </location>
</feature>
<reference key="1">
    <citation type="journal article" date="2000" name="Eur. J. Biochem.">
        <title>Molecular cloning and characterization of murine and human N-acetylglucosamine kinase.</title>
        <authorList>
            <person name="Hinderlich S."/>
            <person name="Berger M."/>
            <person name="Schwarzkopf M."/>
            <person name="Effertz K."/>
            <person name="Reutter W."/>
        </authorList>
    </citation>
    <scope>NUCLEOTIDE SEQUENCE [MRNA]</scope>
    <scope>FUNCTION</scope>
    <scope>CATALYTIC ACTIVITY</scope>
    <scope>PATHWAY</scope>
    <scope>TISSUE SPECIFICITY</scope>
    <scope>SUBUNIT</scope>
</reference>
<reference key="2">
    <citation type="journal article" date="2004" name="Genome Res.">
        <title>The status, quality, and expansion of the NIH full-length cDNA project: the Mammalian Gene Collection (MGC).</title>
        <authorList>
            <consortium name="The MGC Project Team"/>
        </authorList>
    </citation>
    <scope>NUCLEOTIDE SEQUENCE [LARGE SCALE MRNA]</scope>
</reference>
<reference key="3">
    <citation type="journal article" date="2010" name="Cell">
        <title>A tissue-specific atlas of mouse protein phosphorylation and expression.</title>
        <authorList>
            <person name="Huttlin E.L."/>
            <person name="Jedrychowski M.P."/>
            <person name="Elias J.E."/>
            <person name="Goswami T."/>
            <person name="Rad R."/>
            <person name="Beausoleil S.A."/>
            <person name="Villen J."/>
            <person name="Haas W."/>
            <person name="Sowa M.E."/>
            <person name="Gygi S.P."/>
        </authorList>
    </citation>
    <scope>PHOSPHORYLATION [LARGE SCALE ANALYSIS] AT SER-76</scope>
    <scope>IDENTIFICATION BY MASS SPECTROMETRY [LARGE SCALE ANALYSIS]</scope>
    <source>
        <tissue>Brain</tissue>
        <tissue>Heart</tissue>
        <tissue>Kidney</tissue>
        <tissue>Lung</tissue>
        <tissue>Spleen</tissue>
        <tissue>Testis</tissue>
    </source>
</reference>
<reference key="4">
    <citation type="journal article" date="2012" name="J. Biol. Chem.">
        <title>Metabolism of vertebrate amino sugars with N-glycolyl groups: elucidating the intracellular fate of the non-human sialic acid N-glycolylneuraminic acid.</title>
        <authorList>
            <person name="Bergfeld A.K."/>
            <person name="Pearce O.M."/>
            <person name="Diaz S.L."/>
            <person name="Pham T."/>
            <person name="Varki A."/>
        </authorList>
    </citation>
    <scope>PATHWAY</scope>
</reference>
<reference key="5">
    <citation type="journal article" date="2022" name="Nature">
        <title>Phosphorylation of muramyl peptides by NAGK is required for NOD2 activation.</title>
        <authorList>
            <person name="Stafford C.A."/>
            <person name="Gassauer A.M."/>
            <person name="de Oliveira Mann C.C."/>
            <person name="Tanzer M.C."/>
            <person name="Fessler E."/>
            <person name="Wefers B."/>
            <person name="Nagl D."/>
            <person name="Kuut G."/>
            <person name="Sulek K."/>
            <person name="Vasilopoulou C."/>
            <person name="Schwojer S.J."/>
            <person name="Wiest A."/>
            <person name="Pfautsch M.K."/>
            <person name="Wurst W."/>
            <person name="Yabal M."/>
            <person name="Froehlich T."/>
            <person name="Mann M."/>
            <person name="Gisch N."/>
            <person name="Jae L.T."/>
            <person name="Hornung V."/>
        </authorList>
    </citation>
    <scope>FUNCTION</scope>
    <scope>DISRUPTION PHENOTYPE</scope>
</reference>
<proteinExistence type="evidence at protein level"/>